<organism>
    <name type="scientific">Xenopus tropicalis</name>
    <name type="common">Western clawed frog</name>
    <name type="synonym">Silurana tropicalis</name>
    <dbReference type="NCBI Taxonomy" id="8364"/>
    <lineage>
        <taxon>Eukaryota</taxon>
        <taxon>Metazoa</taxon>
        <taxon>Chordata</taxon>
        <taxon>Craniata</taxon>
        <taxon>Vertebrata</taxon>
        <taxon>Euteleostomi</taxon>
        <taxon>Amphibia</taxon>
        <taxon>Batrachia</taxon>
        <taxon>Anura</taxon>
        <taxon>Pipoidea</taxon>
        <taxon>Pipidae</taxon>
        <taxon>Xenopodinae</taxon>
        <taxon>Xenopus</taxon>
        <taxon>Silurana</taxon>
    </lineage>
</organism>
<keyword id="KW-0963">Cytoplasm</keyword>
<keyword id="KW-0408">Iron</keyword>
<keyword id="KW-0411">Iron-sulfur</keyword>
<keyword id="KW-0433">Leucine-rich repeat</keyword>
<keyword id="KW-0479">Metal-binding</keyword>
<keyword id="KW-0539">Nucleus</keyword>
<keyword id="KW-1185">Reference proteome</keyword>
<keyword id="KW-0677">Repeat</keyword>
<keyword id="KW-0832">Ubl conjugation</keyword>
<keyword id="KW-0833">Ubl conjugation pathway</keyword>
<evidence type="ECO:0000250" key="1">
    <source>
        <dbReference type="UniProtKB" id="Q9UKA1"/>
    </source>
</evidence>
<evidence type="ECO:0000255" key="2">
    <source>
        <dbReference type="PROSITE-ProRule" id="PRU00080"/>
    </source>
</evidence>
<evidence type="ECO:0000256" key="3">
    <source>
        <dbReference type="SAM" id="MobiDB-lite"/>
    </source>
</evidence>
<dbReference type="EMBL" id="BC084456">
    <property type="protein sequence ID" value="AAH84456.1"/>
    <property type="molecule type" value="mRNA"/>
</dbReference>
<dbReference type="RefSeq" id="NP_001011072.1">
    <property type="nucleotide sequence ID" value="NM_001011072.1"/>
</dbReference>
<dbReference type="FunCoup" id="Q5XGI3">
    <property type="interactions" value="548"/>
</dbReference>
<dbReference type="STRING" id="8364.ENSXETP00000027789"/>
<dbReference type="PaxDb" id="8364-ENSXETP00000043856"/>
<dbReference type="GeneID" id="496483"/>
<dbReference type="KEGG" id="xtr:496483"/>
<dbReference type="AGR" id="Xenbase:XB-GENE-968565"/>
<dbReference type="CTD" id="26234"/>
<dbReference type="Xenbase" id="XB-GENE-968565">
    <property type="gene designation" value="fbxl5"/>
</dbReference>
<dbReference type="eggNOG" id="ENOG502QS5I">
    <property type="taxonomic scope" value="Eukaryota"/>
</dbReference>
<dbReference type="InParanoid" id="Q5XGI3"/>
<dbReference type="OrthoDB" id="10257471at2759"/>
<dbReference type="UniPathway" id="UPA00143"/>
<dbReference type="Proteomes" id="UP000008143">
    <property type="component" value="Chromosome 1"/>
</dbReference>
<dbReference type="GO" id="GO:0005634">
    <property type="term" value="C:nucleus"/>
    <property type="evidence" value="ECO:0007669"/>
    <property type="project" value="UniProtKB-SubCell"/>
</dbReference>
<dbReference type="GO" id="GO:0048471">
    <property type="term" value="C:perinuclear region of cytoplasm"/>
    <property type="evidence" value="ECO:0000250"/>
    <property type="project" value="UniProtKB"/>
</dbReference>
<dbReference type="GO" id="GO:0019005">
    <property type="term" value="C:SCF ubiquitin ligase complex"/>
    <property type="evidence" value="ECO:0000250"/>
    <property type="project" value="UniProtKB"/>
</dbReference>
<dbReference type="GO" id="GO:0005506">
    <property type="term" value="F:iron ion binding"/>
    <property type="evidence" value="ECO:0000250"/>
    <property type="project" value="UniProtKB"/>
</dbReference>
<dbReference type="GO" id="GO:0051536">
    <property type="term" value="F:iron-sulfur cluster binding"/>
    <property type="evidence" value="ECO:0007669"/>
    <property type="project" value="UniProtKB-KW"/>
</dbReference>
<dbReference type="GO" id="GO:0006879">
    <property type="term" value="P:intracellular iron ion homeostasis"/>
    <property type="evidence" value="ECO:0000250"/>
    <property type="project" value="UniProtKB"/>
</dbReference>
<dbReference type="GO" id="GO:0016567">
    <property type="term" value="P:protein ubiquitination"/>
    <property type="evidence" value="ECO:0000250"/>
    <property type="project" value="UniProtKB"/>
</dbReference>
<dbReference type="GO" id="GO:0031146">
    <property type="term" value="P:SCF-dependent proteasomal ubiquitin-dependent protein catabolic process"/>
    <property type="evidence" value="ECO:0000250"/>
    <property type="project" value="UniProtKB"/>
</dbReference>
<dbReference type="CDD" id="cd22118">
    <property type="entry name" value="F-box_FBXL5"/>
    <property type="match status" value="1"/>
</dbReference>
<dbReference type="CDD" id="cd12109">
    <property type="entry name" value="Hr_FBXL5"/>
    <property type="match status" value="1"/>
</dbReference>
<dbReference type="FunFam" id="3.80.10.10:FF:001008">
    <property type="entry name" value="F-box/LRR-repeat protein 5"/>
    <property type="match status" value="1"/>
</dbReference>
<dbReference type="FunFam" id="1.20.1280.50:FF:000007">
    <property type="entry name" value="F-box/LRR-repeat protein 5 isoform X1"/>
    <property type="match status" value="1"/>
</dbReference>
<dbReference type="FunFam" id="3.80.10.10:FF:000086">
    <property type="entry name" value="F-box/LRR-repeat protein 5 isoform X1"/>
    <property type="match status" value="1"/>
</dbReference>
<dbReference type="FunFam" id="1.20.120.520:FF:000002">
    <property type="entry name" value="F-box/LRR-repeat protein 5 isoform X2"/>
    <property type="match status" value="1"/>
</dbReference>
<dbReference type="Gene3D" id="1.20.1280.50">
    <property type="match status" value="1"/>
</dbReference>
<dbReference type="Gene3D" id="1.20.120.520">
    <property type="entry name" value="nmb1532 protein domain like"/>
    <property type="match status" value="1"/>
</dbReference>
<dbReference type="Gene3D" id="3.80.10.10">
    <property type="entry name" value="Ribonuclease Inhibitor"/>
    <property type="match status" value="2"/>
</dbReference>
<dbReference type="InterPro" id="IPR036047">
    <property type="entry name" value="F-box-like_dom_sf"/>
</dbReference>
<dbReference type="InterPro" id="IPR001810">
    <property type="entry name" value="F-box_dom"/>
</dbReference>
<dbReference type="InterPro" id="IPR012312">
    <property type="entry name" value="Hemerythrin-like"/>
</dbReference>
<dbReference type="InterPro" id="IPR045808">
    <property type="entry name" value="Hr_FBXL5"/>
</dbReference>
<dbReference type="InterPro" id="IPR001611">
    <property type="entry name" value="Leu-rich_rpt"/>
</dbReference>
<dbReference type="InterPro" id="IPR006553">
    <property type="entry name" value="Leu-rich_rpt_Cys-con_subtyp"/>
</dbReference>
<dbReference type="InterPro" id="IPR032675">
    <property type="entry name" value="LRR_dom_sf"/>
</dbReference>
<dbReference type="PANTHER" id="PTHR13318:SF19">
    <property type="entry name" value="F-BOX_LRR-REPEAT PROTEIN 5"/>
    <property type="match status" value="1"/>
</dbReference>
<dbReference type="PANTHER" id="PTHR13318">
    <property type="entry name" value="PARTNER OF PAIRED, ISOFORM B-RELATED"/>
    <property type="match status" value="1"/>
</dbReference>
<dbReference type="Pfam" id="PF12937">
    <property type="entry name" value="F-box-like"/>
    <property type="match status" value="1"/>
</dbReference>
<dbReference type="Pfam" id="PF01814">
    <property type="entry name" value="Hemerythrin"/>
    <property type="match status" value="1"/>
</dbReference>
<dbReference type="Pfam" id="PF13516">
    <property type="entry name" value="LRR_6"/>
    <property type="match status" value="3"/>
</dbReference>
<dbReference type="SMART" id="SM00256">
    <property type="entry name" value="FBOX"/>
    <property type="match status" value="1"/>
</dbReference>
<dbReference type="SMART" id="SM00367">
    <property type="entry name" value="LRR_CC"/>
    <property type="match status" value="4"/>
</dbReference>
<dbReference type="SUPFAM" id="SSF81383">
    <property type="entry name" value="F-box domain"/>
    <property type="match status" value="1"/>
</dbReference>
<dbReference type="SUPFAM" id="SSF52047">
    <property type="entry name" value="RNI-like"/>
    <property type="match status" value="1"/>
</dbReference>
<dbReference type="PROSITE" id="PS50181">
    <property type="entry name" value="FBOX"/>
    <property type="match status" value="1"/>
</dbReference>
<sequence length="660" mass="74820">MAPFPDEVDLFTGPHWRMKQLVGRYCEKLSNTNFSSNTDFLALLQSLYETFKEFKMHEQIENEYIIGLLQQRSQTVFNVHSDNKLSEMLVLFEKGMKNNEYEQLNYAQQLKERLEAFTSDFLPHMKEEEEVFQPMLMEYFTYDELKDIKKKVIAQHCSQKDTAELLRGFSLWNKAEELQKVFKYSVDEKIERDSKNRKSSASICNLPPEVMLNIFSYLNPQDLCRCSQVNTKWAQLARTGSLWRHLYPVLWARGDWYSGPPTHLDNEPDEDWISRRKDESRAYQEWDEDADIDESEETGEDDPSISVAQREKELLNSLVHYILPYIGHSVKTLVLAYSSATSNKVIRQILEYCPNMEHLDLTQTDISDSAFNGWCFGACQTLRHIDLSGCEKITDSALEKLSVALGMPLAHKKRLLKCYRNNRTVKDIRNQMRCGSLAQITGESGIYSDYSSSQIWILNSGNLGDIEDAADWKFRTTDGLGVLEMTPNLTCFSNGCCSRAVPGRWTNVIRQEHCKAAPLNYCGHTLCGNTLRTIQALPGSNIGTKTLQSEIRDICPGSAKLDQQVARVLQFLSLSGCHQITDHGLRVLTIGGGLPNLEHLNLSGCLNVTGSGLQDLVSACPSLNDEHFYYCDNISGPHAATASGCQNLQCGFRACCRSGE</sequence>
<feature type="chain" id="PRO_0000390469" description="F-box/LRR-repeat protein 5">
    <location>
        <begin position="1"/>
        <end position="660"/>
    </location>
</feature>
<feature type="domain" description="F-box" evidence="2">
    <location>
        <begin position="200"/>
        <end position="246"/>
    </location>
</feature>
<feature type="repeat" description="LRR 1">
    <location>
        <begin position="311"/>
        <end position="337"/>
    </location>
</feature>
<feature type="repeat" description="LRR 2">
    <location>
        <begin position="338"/>
        <end position="362"/>
    </location>
</feature>
<feature type="repeat" description="LRR 3">
    <location>
        <begin position="363"/>
        <end position="389"/>
    </location>
</feature>
<feature type="repeat" description="LRR 4">
    <location>
        <begin position="390"/>
        <end position="417"/>
    </location>
</feature>
<feature type="repeat" description="LRR 5">
    <location>
        <begin position="551"/>
        <end position="576"/>
    </location>
</feature>
<feature type="repeat" description="LRR 6">
    <location>
        <begin position="577"/>
        <end position="604"/>
    </location>
</feature>
<feature type="repeat" description="LRR 7">
    <location>
        <begin position="605"/>
        <end position="630"/>
    </location>
</feature>
<feature type="repeat" description="LRR 8">
    <location>
        <begin position="631"/>
        <end position="649"/>
    </location>
</feature>
<feature type="region of interest" description="Hemerythrin-like" evidence="1">
    <location>
        <begin position="1"/>
        <end position="157"/>
    </location>
</feature>
<feature type="region of interest" description="Disordered" evidence="3">
    <location>
        <begin position="283"/>
        <end position="305"/>
    </location>
</feature>
<feature type="compositionally biased region" description="Acidic residues" evidence="3">
    <location>
        <begin position="285"/>
        <end position="303"/>
    </location>
</feature>
<feature type="binding site" evidence="1">
    <location>
        <position position="15"/>
    </location>
    <ligand>
        <name>Fe(3+)</name>
        <dbReference type="ChEBI" id="CHEBI:29034"/>
        <label>1</label>
    </ligand>
</feature>
<feature type="binding site" evidence="1">
    <location>
        <position position="57"/>
    </location>
    <ligand>
        <name>Fe(3+)</name>
        <dbReference type="ChEBI" id="CHEBI:29034"/>
        <label>1</label>
    </ligand>
</feature>
<feature type="binding site" evidence="1">
    <location>
        <position position="58"/>
    </location>
    <ligand>
        <name>Fe(3+)</name>
        <dbReference type="ChEBI" id="CHEBI:29034"/>
        <label>2</label>
    </ligand>
</feature>
<feature type="binding site" evidence="1">
    <location>
        <position position="61"/>
    </location>
    <ligand>
        <name>Fe(3+)</name>
        <dbReference type="ChEBI" id="CHEBI:29034"/>
        <label>1</label>
    </ligand>
</feature>
<feature type="binding site" evidence="1">
    <location>
        <position position="61"/>
    </location>
    <ligand>
        <name>Fe(3+)</name>
        <dbReference type="ChEBI" id="CHEBI:29034"/>
        <label>2</label>
    </ligand>
</feature>
<feature type="binding site" evidence="1">
    <location>
        <position position="80"/>
    </location>
    <ligand>
        <name>Fe(3+)</name>
        <dbReference type="ChEBI" id="CHEBI:29034"/>
        <label>2</label>
    </ligand>
</feature>
<feature type="binding site" evidence="1">
    <location>
        <position position="124"/>
    </location>
    <ligand>
        <name>Fe(3+)</name>
        <dbReference type="ChEBI" id="CHEBI:29034"/>
        <label>2</label>
    </ligand>
</feature>
<feature type="binding site" evidence="1">
    <location>
        <position position="127"/>
    </location>
    <ligand>
        <name>Fe(3+)</name>
        <dbReference type="ChEBI" id="CHEBI:29034"/>
        <label>1</label>
    </ligand>
</feature>
<feature type="binding site" evidence="1">
    <location>
        <position position="127"/>
    </location>
    <ligand>
        <name>Fe(3+)</name>
        <dbReference type="ChEBI" id="CHEBI:29034"/>
        <label>2</label>
    </ligand>
</feature>
<feature type="binding site" evidence="1">
    <location>
        <position position="631"/>
    </location>
    <ligand>
        <name>[2Fe-2S] cluster</name>
        <dbReference type="ChEBI" id="CHEBI:190135"/>
    </ligand>
</feature>
<feature type="binding site" evidence="1">
    <location>
        <position position="645"/>
    </location>
    <ligand>
        <name>[2Fe-2S] cluster</name>
        <dbReference type="ChEBI" id="CHEBI:190135"/>
    </ligand>
</feature>
<feature type="binding site" evidence="1">
    <location>
        <position position="655"/>
    </location>
    <ligand>
        <name>[2Fe-2S] cluster</name>
        <dbReference type="ChEBI" id="CHEBI:190135"/>
    </ligand>
</feature>
<feature type="binding site" evidence="1">
    <location>
        <position position="656"/>
    </location>
    <ligand>
        <name>[2Fe-2S] cluster</name>
        <dbReference type="ChEBI" id="CHEBI:190135"/>
    </ligand>
</feature>
<accession>Q5XGI3</accession>
<protein>
    <recommendedName>
        <fullName>F-box/LRR-repeat protein 5</fullName>
    </recommendedName>
    <alternativeName>
        <fullName>F-box and leucine-rich repeat protein 5</fullName>
    </alternativeName>
</protein>
<reference key="1">
    <citation type="submission" date="2004-10" db="EMBL/GenBank/DDBJ databases">
        <authorList>
            <consortium name="NIH - Xenopus Gene Collection (XGC) project"/>
        </authorList>
    </citation>
    <scope>NUCLEOTIDE SEQUENCE [LARGE SCALE MRNA]</scope>
</reference>
<comment type="function">
    <text evidence="1">Component of some SCF (SKP1-cullin-F-box) protein ligase complex that plays a central role in iron homeostasis by promoting the ubiquitination and subsequent degradation of ireb2/irp2. Upon high iron and oxygen level, it specifically recognizes and binds ireb2/irp2, promoting its ubiquitination and degradation by the proteasome (By similarity).</text>
</comment>
<comment type="cofactor">
    <cofactor evidence="1">
        <name>[2Fe-2S] cluster</name>
        <dbReference type="ChEBI" id="CHEBI:190135"/>
    </cofactor>
</comment>
<comment type="pathway">
    <text>Protein modification; protein ubiquitination.</text>
</comment>
<comment type="subunit">
    <text evidence="1">Part of a SCF (SKP1-cullin-F-box) protein ligase complex.</text>
</comment>
<comment type="subcellular location">
    <subcellularLocation>
        <location evidence="1">Cytoplasm</location>
        <location evidence="1">Perinuclear region</location>
    </subcellularLocation>
    <subcellularLocation>
        <location evidence="1">Nucleus</location>
    </subcellularLocation>
</comment>
<comment type="domain">
    <text evidence="1">The hemerythrin-like region acts as an oxygen and iron sensor by binding oxygen through a diiron metal-center. In absence of oxygen and iron, the protein is ubiquitinated and degraded (By similarity).</text>
</comment>
<comment type="PTM">
    <text evidence="1">Ubiquitinated upon iron and oxygen depletion, leading to its degradation by the proteasome. Ubiquitination is regulated by the hemerythrin-like region that acts as an oxygen and iron sensor (By similarity).</text>
</comment>
<name>FBXL5_XENTR</name>
<gene>
    <name type="primary">fbxl5</name>
</gene>
<proteinExistence type="evidence at transcript level"/>